<keyword id="KW-0963">Cytoplasm</keyword>
<keyword id="KW-0489">Methyltransferase</keyword>
<keyword id="KW-0698">rRNA processing</keyword>
<keyword id="KW-0949">S-adenosyl-L-methionine</keyword>
<keyword id="KW-0808">Transferase</keyword>
<comment type="function">
    <text evidence="1">Catalyzes the 2'-O-methylation at nucleotide C2498 in 23S rRNA.</text>
</comment>
<comment type="catalytic activity">
    <reaction evidence="1">
        <text>cytidine(2498) in 23S rRNA + S-adenosyl-L-methionine = 2'-O-methylcytidine(2498) in 23S rRNA + S-adenosyl-L-homocysteine + H(+)</text>
        <dbReference type="Rhea" id="RHEA:42788"/>
        <dbReference type="Rhea" id="RHEA-COMP:10244"/>
        <dbReference type="Rhea" id="RHEA-COMP:10245"/>
        <dbReference type="ChEBI" id="CHEBI:15378"/>
        <dbReference type="ChEBI" id="CHEBI:57856"/>
        <dbReference type="ChEBI" id="CHEBI:59789"/>
        <dbReference type="ChEBI" id="CHEBI:74495"/>
        <dbReference type="ChEBI" id="CHEBI:82748"/>
        <dbReference type="EC" id="2.1.1.186"/>
    </reaction>
</comment>
<comment type="subunit">
    <text evidence="1">Monomer.</text>
</comment>
<comment type="subcellular location">
    <subcellularLocation>
        <location evidence="1">Cytoplasm</location>
    </subcellularLocation>
</comment>
<comment type="similarity">
    <text evidence="1">Belongs to the class I-like SAM-binding methyltransferase superfamily. RNA methyltransferase RlmE family. RlmM subfamily.</text>
</comment>
<organism>
    <name type="scientific">Photorhabdus asymbiotica subsp. asymbiotica (strain ATCC 43949 / 3105-77)</name>
    <name type="common">Xenorhabdus luminescens (strain 2)</name>
    <dbReference type="NCBI Taxonomy" id="553480"/>
    <lineage>
        <taxon>Bacteria</taxon>
        <taxon>Pseudomonadati</taxon>
        <taxon>Pseudomonadota</taxon>
        <taxon>Gammaproteobacteria</taxon>
        <taxon>Enterobacterales</taxon>
        <taxon>Morganellaceae</taxon>
        <taxon>Photorhabdus</taxon>
    </lineage>
</organism>
<proteinExistence type="inferred from homology"/>
<dbReference type="EC" id="2.1.1.186" evidence="1"/>
<dbReference type="EMBL" id="FM162591">
    <property type="protein sequence ID" value="CAQ82696.1"/>
    <property type="molecule type" value="Genomic_DNA"/>
</dbReference>
<dbReference type="SMR" id="C7BKL0"/>
<dbReference type="STRING" id="291112.PAU_00604"/>
<dbReference type="KEGG" id="pay:PAU_00604"/>
<dbReference type="eggNOG" id="COG2933">
    <property type="taxonomic scope" value="Bacteria"/>
</dbReference>
<dbReference type="Proteomes" id="UP000002747">
    <property type="component" value="Chromosome"/>
</dbReference>
<dbReference type="GO" id="GO:0005737">
    <property type="term" value="C:cytoplasm"/>
    <property type="evidence" value="ECO:0007669"/>
    <property type="project" value="UniProtKB-SubCell"/>
</dbReference>
<dbReference type="GO" id="GO:0008757">
    <property type="term" value="F:S-adenosylmethionine-dependent methyltransferase activity"/>
    <property type="evidence" value="ECO:0007669"/>
    <property type="project" value="UniProtKB-UniRule"/>
</dbReference>
<dbReference type="GO" id="GO:0032259">
    <property type="term" value="P:methylation"/>
    <property type="evidence" value="ECO:0007669"/>
    <property type="project" value="UniProtKB-KW"/>
</dbReference>
<dbReference type="GO" id="GO:0006364">
    <property type="term" value="P:rRNA processing"/>
    <property type="evidence" value="ECO:0007669"/>
    <property type="project" value="UniProtKB-UniRule"/>
</dbReference>
<dbReference type="Gene3D" id="3.30.2300.20">
    <property type="match status" value="1"/>
</dbReference>
<dbReference type="Gene3D" id="3.30.70.2810">
    <property type="match status" value="1"/>
</dbReference>
<dbReference type="Gene3D" id="3.40.50.150">
    <property type="entry name" value="Vaccinia Virus protein VP39"/>
    <property type="match status" value="1"/>
</dbReference>
<dbReference type="HAMAP" id="MF_01551">
    <property type="entry name" value="23SrRNA_methyltr_M"/>
    <property type="match status" value="1"/>
</dbReference>
<dbReference type="InterPro" id="IPR040739">
    <property type="entry name" value="RlmM_FDX"/>
</dbReference>
<dbReference type="InterPro" id="IPR048646">
    <property type="entry name" value="RlmM_THUMP-like"/>
</dbReference>
<dbReference type="InterPro" id="IPR002877">
    <property type="entry name" value="RNA_MeTrfase_FtsJ_dom"/>
</dbReference>
<dbReference type="InterPro" id="IPR011224">
    <property type="entry name" value="rRNA_MeTrfase_M"/>
</dbReference>
<dbReference type="InterPro" id="IPR029063">
    <property type="entry name" value="SAM-dependent_MTases_sf"/>
</dbReference>
<dbReference type="NCBIfam" id="NF008734">
    <property type="entry name" value="PRK11760.1"/>
    <property type="match status" value="1"/>
</dbReference>
<dbReference type="PANTHER" id="PTHR37524">
    <property type="entry name" value="RIBOSOMAL RNA LARGE SUBUNIT METHYLTRANSFERASE M"/>
    <property type="match status" value="1"/>
</dbReference>
<dbReference type="PANTHER" id="PTHR37524:SF2">
    <property type="entry name" value="RIBOSOMAL RNA METHYLTRANSFERASE FTSJ DOMAIN-CONTAINING PROTEIN"/>
    <property type="match status" value="1"/>
</dbReference>
<dbReference type="Pfam" id="PF01728">
    <property type="entry name" value="FtsJ"/>
    <property type="match status" value="1"/>
</dbReference>
<dbReference type="Pfam" id="PF18125">
    <property type="entry name" value="RlmM_FDX"/>
    <property type="match status" value="1"/>
</dbReference>
<dbReference type="Pfam" id="PF21239">
    <property type="entry name" value="RLMM_N"/>
    <property type="match status" value="1"/>
</dbReference>
<dbReference type="PIRSF" id="PIRSF028774">
    <property type="entry name" value="UCP028774"/>
    <property type="match status" value="1"/>
</dbReference>
<dbReference type="SUPFAM" id="SSF53335">
    <property type="entry name" value="S-adenosyl-L-methionine-dependent methyltransferases"/>
    <property type="match status" value="1"/>
</dbReference>
<reference key="1">
    <citation type="journal article" date="2009" name="BMC Genomics">
        <title>Comparative genomics of the emerging human pathogen Photorhabdus asymbiotica with the insect pathogen Photorhabdus luminescens.</title>
        <authorList>
            <person name="Wilkinson P."/>
            <person name="Waterfield N.R."/>
            <person name="Crossman L."/>
            <person name="Corton C."/>
            <person name="Sanchez-Contreras M."/>
            <person name="Vlisidou I."/>
            <person name="Barron A."/>
            <person name="Bignell A."/>
            <person name="Clark L."/>
            <person name="Ormond D."/>
            <person name="Mayho M."/>
            <person name="Bason N."/>
            <person name="Smith F."/>
            <person name="Simmonds M."/>
            <person name="Churcher C."/>
            <person name="Harris D."/>
            <person name="Thompson N.R."/>
            <person name="Quail M."/>
            <person name="Parkhill J."/>
            <person name="ffrench-Constant R.H."/>
        </authorList>
    </citation>
    <scope>NUCLEOTIDE SEQUENCE [LARGE SCALE GENOMIC DNA]</scope>
    <source>
        <strain>ATCC 43949 / 3105-77</strain>
    </source>
</reference>
<accession>C7BKL0</accession>
<evidence type="ECO:0000255" key="1">
    <source>
        <dbReference type="HAMAP-Rule" id="MF_01551"/>
    </source>
</evidence>
<sequence length="366" mass="42415">MNKIALYCRPGFEKECAAEITDKAGQKEIYGFARVKDNSGYVLFECYQHEDADRLIREIPFRELIFARQMLVVGELLRDLPPEDRVSPIVGMLHGVIERAGDLRVEVPDTNESKELLKFCRKFTVPLRNAMRQEKILQIRENTKRPVIHVFFIAPGCCYVGYSYSHNNSPFYMGIPRLKFPSDAPSRSTLKLEEAFHVFIPYDEWEERLASGLYAVDLGACPGGWTYQLVKRSMMVHAVDNGPMSQSLMDTGQVRHHKVDGFKFEPLVKNIYWLVCDMVEKPAKVTQLMADWLVNGWCREAIFNLKLPMKKRYEEVAHNLQKMNLQLKENGINAQIQAKHLYHDREEITVHVRRIWSAYAASRNND</sequence>
<gene>
    <name evidence="1" type="primary">rlmM</name>
    <name type="ordered locus">PAU_00604</name>
</gene>
<protein>
    <recommendedName>
        <fullName evidence="1">Ribosomal RNA large subunit methyltransferase M</fullName>
        <ecNumber evidence="1">2.1.1.186</ecNumber>
    </recommendedName>
    <alternativeName>
        <fullName evidence="1">23S rRNA (cytidine2498-2'-O)-methyltransferase</fullName>
    </alternativeName>
    <alternativeName>
        <fullName evidence="1">23S rRNA 2'-O-ribose methyltransferase RlmM</fullName>
    </alternativeName>
</protein>
<name>RLMM_PHOAA</name>
<feature type="chain" id="PRO_0000388986" description="Ribosomal RNA large subunit methyltransferase M">
    <location>
        <begin position="1"/>
        <end position="366"/>
    </location>
</feature>
<feature type="active site" description="Proton acceptor" evidence="1">
    <location>
        <position position="306"/>
    </location>
</feature>
<feature type="binding site" evidence="1">
    <location>
        <position position="188"/>
    </location>
    <ligand>
        <name>S-adenosyl-L-methionine</name>
        <dbReference type="ChEBI" id="CHEBI:59789"/>
    </ligand>
</feature>
<feature type="binding site" evidence="1">
    <location>
        <begin position="221"/>
        <end position="224"/>
    </location>
    <ligand>
        <name>S-adenosyl-L-methionine</name>
        <dbReference type="ChEBI" id="CHEBI:59789"/>
    </ligand>
</feature>
<feature type="binding site" evidence="1">
    <location>
        <position position="240"/>
    </location>
    <ligand>
        <name>S-adenosyl-L-methionine</name>
        <dbReference type="ChEBI" id="CHEBI:59789"/>
    </ligand>
</feature>
<feature type="binding site" evidence="1">
    <location>
        <position position="260"/>
    </location>
    <ligand>
        <name>S-adenosyl-L-methionine</name>
        <dbReference type="ChEBI" id="CHEBI:59789"/>
    </ligand>
</feature>
<feature type="binding site" evidence="1">
    <location>
        <position position="277"/>
    </location>
    <ligand>
        <name>S-adenosyl-L-methionine</name>
        <dbReference type="ChEBI" id="CHEBI:59789"/>
    </ligand>
</feature>